<name>Y1398_METMP</name>
<accession>Q6LXF3</accession>
<proteinExistence type="evidence at protein level"/>
<feature type="chain" id="PRO_0000342209" description="Uncharacterized metallohydrolase MMP1398">
    <location>
        <begin position="1"/>
        <end position="415"/>
    </location>
</feature>
<feature type="active site" evidence="1">
    <location>
        <position position="90"/>
    </location>
</feature>
<feature type="active site" description="Proton acceptor" evidence="1">
    <location>
        <position position="155"/>
    </location>
</feature>
<feature type="binding site" evidence="1">
    <location>
        <position position="88"/>
    </location>
    <ligand>
        <name>Zn(2+)</name>
        <dbReference type="ChEBI" id="CHEBI:29105"/>
        <label>1</label>
    </ligand>
</feature>
<feature type="binding site" evidence="1">
    <location>
        <position position="121"/>
    </location>
    <ligand>
        <name>Zn(2+)</name>
        <dbReference type="ChEBI" id="CHEBI:29105"/>
        <label>1</label>
    </ligand>
</feature>
<feature type="binding site" evidence="1">
    <location>
        <position position="121"/>
    </location>
    <ligand>
        <name>Zn(2+)</name>
        <dbReference type="ChEBI" id="CHEBI:29105"/>
        <label>2</label>
    </ligand>
</feature>
<feature type="binding site" evidence="1">
    <location>
        <position position="156"/>
    </location>
    <ligand>
        <name>Zn(2+)</name>
        <dbReference type="ChEBI" id="CHEBI:29105"/>
        <label>2</label>
    </ligand>
</feature>
<feature type="binding site" evidence="1">
    <location>
        <position position="185"/>
    </location>
    <ligand>
        <name>Zn(2+)</name>
        <dbReference type="ChEBI" id="CHEBI:29105"/>
        <label>1</label>
    </ligand>
</feature>
<feature type="binding site" evidence="1">
    <location>
        <position position="392"/>
    </location>
    <ligand>
        <name>Zn(2+)</name>
        <dbReference type="ChEBI" id="CHEBI:29105"/>
        <label>2</label>
    </ligand>
</feature>
<protein>
    <recommendedName>
        <fullName>Uncharacterized metallohydrolase MMP1398</fullName>
        <ecNumber>3.-.-.-</ecNumber>
    </recommendedName>
</protein>
<sequence>MKSILDETIELSSDLISINSVNPTFGGIGEKEKSIYIKNKLEEYNKNYSIKNCEITEYNTVDSEGIERPNIVSKYDFGKNDTLTIISHMDIVPEGDLGLWNSDPFKAEIKDGIIYGRGSEDNHKGIVSSFLLLKMIFEEKIDPKYNLNLIFVADEEDGSKYGLSYLVNNFEDEIFSSKDLIIVPDFGMPEGEFIEIAEKNILWLKFKITGKQCHGSVPENGINADLIAFSFGKGLYDKLYGKYDGINPIFNPAFSTFEPTILKNNIENINTIPGYVELNFDCRIIPKYDPKEVLSDIENYIEVFKNEIEKHILHFDISEKENISITYEILKLEKAEETKKDSEVVKKLGSAIKNVLNKESVLCGMGGGTVAAFLREKGYNTAVWGIGDETAHQPNEHIKIENLIKMAEVYLDILK</sequence>
<keyword id="KW-0170">Cobalt</keyword>
<keyword id="KW-0378">Hydrolase</keyword>
<keyword id="KW-0479">Metal-binding</keyword>
<keyword id="KW-1185">Reference proteome</keyword>
<keyword id="KW-0862">Zinc</keyword>
<evidence type="ECO:0000250" key="1"/>
<evidence type="ECO:0000305" key="2"/>
<gene>
    <name type="ordered locus">MMP1398</name>
</gene>
<dbReference type="EC" id="3.-.-.-"/>
<dbReference type="EMBL" id="BX950229">
    <property type="protein sequence ID" value="CAF30954.1"/>
    <property type="molecule type" value="Genomic_DNA"/>
</dbReference>
<dbReference type="RefSeq" id="WP_011171342.1">
    <property type="nucleotide sequence ID" value="NC_005791.1"/>
</dbReference>
<dbReference type="SMR" id="Q6LXF3"/>
<dbReference type="STRING" id="267377.MMP1398"/>
<dbReference type="EnsemblBacteria" id="CAF30954">
    <property type="protein sequence ID" value="CAF30954"/>
    <property type="gene ID" value="MMP1398"/>
</dbReference>
<dbReference type="GeneID" id="2761514"/>
<dbReference type="KEGG" id="mmp:MMP1398"/>
<dbReference type="PATRIC" id="fig|267377.15.peg.1434"/>
<dbReference type="eggNOG" id="arCOG01107">
    <property type="taxonomic scope" value="Archaea"/>
</dbReference>
<dbReference type="HOGENOM" id="CLU_021802_2_2_2"/>
<dbReference type="OrthoDB" id="24854at2157"/>
<dbReference type="Proteomes" id="UP000000590">
    <property type="component" value="Chromosome"/>
</dbReference>
<dbReference type="GO" id="GO:0016787">
    <property type="term" value="F:hydrolase activity"/>
    <property type="evidence" value="ECO:0007669"/>
    <property type="project" value="UniProtKB-KW"/>
</dbReference>
<dbReference type="GO" id="GO:0046872">
    <property type="term" value="F:metal ion binding"/>
    <property type="evidence" value="ECO:0007669"/>
    <property type="project" value="UniProtKB-KW"/>
</dbReference>
<dbReference type="Gene3D" id="3.30.70.360">
    <property type="match status" value="1"/>
</dbReference>
<dbReference type="Gene3D" id="3.40.630.10">
    <property type="entry name" value="Zn peptidases"/>
    <property type="match status" value="2"/>
</dbReference>
<dbReference type="InterPro" id="IPR010182">
    <property type="entry name" value="ArgE/DapE"/>
</dbReference>
<dbReference type="InterPro" id="IPR036264">
    <property type="entry name" value="Bact_exopeptidase_dim_dom"/>
</dbReference>
<dbReference type="InterPro" id="IPR002933">
    <property type="entry name" value="Peptidase_M20"/>
</dbReference>
<dbReference type="InterPro" id="IPR011650">
    <property type="entry name" value="Peptidase_M20_dimer"/>
</dbReference>
<dbReference type="InterPro" id="IPR050072">
    <property type="entry name" value="Peptidase_M20A"/>
</dbReference>
<dbReference type="NCBIfam" id="TIGR01910">
    <property type="entry name" value="DapE-ArgE"/>
    <property type="match status" value="1"/>
</dbReference>
<dbReference type="NCBIfam" id="NF010589">
    <property type="entry name" value="PRK13983.1"/>
    <property type="match status" value="1"/>
</dbReference>
<dbReference type="PANTHER" id="PTHR43808">
    <property type="entry name" value="ACETYLORNITHINE DEACETYLASE"/>
    <property type="match status" value="1"/>
</dbReference>
<dbReference type="PANTHER" id="PTHR43808:SF32">
    <property type="entry name" value="ARGE_DAPE-RELATED DEACYLASE"/>
    <property type="match status" value="1"/>
</dbReference>
<dbReference type="Pfam" id="PF07687">
    <property type="entry name" value="M20_dimer"/>
    <property type="match status" value="1"/>
</dbReference>
<dbReference type="Pfam" id="PF01546">
    <property type="entry name" value="Peptidase_M20"/>
    <property type="match status" value="1"/>
</dbReference>
<dbReference type="SUPFAM" id="SSF55031">
    <property type="entry name" value="Bacterial exopeptidase dimerisation domain"/>
    <property type="match status" value="1"/>
</dbReference>
<dbReference type="SUPFAM" id="SSF53187">
    <property type="entry name" value="Zn-dependent exopeptidases"/>
    <property type="match status" value="1"/>
</dbReference>
<reference key="1">
    <citation type="journal article" date="2004" name="J. Bacteriol.">
        <title>Complete genome sequence of the genetically tractable hydrogenotrophic methanogen Methanococcus maripaludis.</title>
        <authorList>
            <person name="Hendrickson E.L."/>
            <person name="Kaul R."/>
            <person name="Zhou Y."/>
            <person name="Bovee D."/>
            <person name="Chapman P."/>
            <person name="Chung J."/>
            <person name="Conway de Macario E."/>
            <person name="Dodsworth J.A."/>
            <person name="Gillett W."/>
            <person name="Graham D.E."/>
            <person name="Hackett M."/>
            <person name="Haydock A.K."/>
            <person name="Kang A."/>
            <person name="Land M.L."/>
            <person name="Levy R."/>
            <person name="Lie T.J."/>
            <person name="Major T.A."/>
            <person name="Moore B.C."/>
            <person name="Porat I."/>
            <person name="Palmeiri A."/>
            <person name="Rouse G."/>
            <person name="Saenphimmachak C."/>
            <person name="Soell D."/>
            <person name="Van Dien S."/>
            <person name="Wang T."/>
            <person name="Whitman W.B."/>
            <person name="Xia Q."/>
            <person name="Zhang Y."/>
            <person name="Larimer F.W."/>
            <person name="Olson M.V."/>
            <person name="Leigh J.A."/>
        </authorList>
    </citation>
    <scope>NUCLEOTIDE SEQUENCE [LARGE SCALE GENOMIC DNA]</scope>
    <source>
        <strain>DSM 14266 / JCM 13030 / NBRC 101832 / S2 / LL</strain>
    </source>
</reference>
<reference key="2">
    <citation type="journal article" date="2008" name="FEBS Lett.">
        <title>Methanogens with pseudomurein use diaminopimelate aminotransferase in lysine biosynthesis.</title>
        <authorList>
            <person name="Graham D.E."/>
            <person name="Huse H.K."/>
        </authorList>
    </citation>
    <scope>LACK OF FUNCTION AS A SUCCINYL-DIAMINOPIMELATE DESUCCINYLASE</scope>
</reference>
<organism>
    <name type="scientific">Methanococcus maripaludis (strain DSM 14266 / JCM 13030 / NBRC 101832 / S2 / LL)</name>
    <dbReference type="NCBI Taxonomy" id="267377"/>
    <lineage>
        <taxon>Archaea</taxon>
        <taxon>Methanobacteriati</taxon>
        <taxon>Methanobacteriota</taxon>
        <taxon>Methanomada group</taxon>
        <taxon>Methanococci</taxon>
        <taxon>Methanococcales</taxon>
        <taxon>Methanococcaceae</taxon>
        <taxon>Methanococcus</taxon>
    </lineage>
</organism>
<comment type="cofactor">
    <cofactor evidence="1">
        <name>Zn(2+)</name>
        <dbReference type="ChEBI" id="CHEBI:29105"/>
    </cofactor>
    <cofactor evidence="1">
        <name>Co(2+)</name>
        <dbReference type="ChEBI" id="CHEBI:48828"/>
    </cofactor>
    <text evidence="1">Binds 2 Zn(2+) or Co(2+) ions per subunit.</text>
</comment>
<comment type="similarity">
    <text evidence="2">Belongs to the peptidase M20A family.</text>
</comment>
<comment type="caution">
    <text evidence="2">Despite its similarity with the succinyl-diaminopimelate desuccinylase enzymes, it does not display DapE activity.</text>
</comment>